<organism>
    <name type="scientific">Klebsiella aerogenes (strain ATCC 13048 / DSM 30053 / CCUG 1429 / JCM 1235 / KCTC 2190 / NBRC 13534 / NCIMB 10102 / NCTC 10006 / CDC 819-56)</name>
    <name type="common">Enterobacter aerogenes</name>
    <dbReference type="NCBI Taxonomy" id="1028307"/>
    <lineage>
        <taxon>Bacteria</taxon>
        <taxon>Pseudomonadati</taxon>
        <taxon>Pseudomonadota</taxon>
        <taxon>Gammaproteobacteria</taxon>
        <taxon>Enterobacterales</taxon>
        <taxon>Enterobacteriaceae</taxon>
        <taxon>Klebsiella/Raoultella group</taxon>
        <taxon>Klebsiella</taxon>
    </lineage>
</organism>
<proteinExistence type="inferred from homology"/>
<name>NANR_KLEAK</name>
<keyword id="KW-0238">DNA-binding</keyword>
<keyword id="KW-1185">Reference proteome</keyword>
<keyword id="KW-0678">Repressor</keyword>
<keyword id="KW-0804">Transcription</keyword>
<keyword id="KW-0805">Transcription regulation</keyword>
<feature type="chain" id="PRO_0000415299" description="HTH-type transcriptional repressor NanR">
    <location>
        <begin position="1"/>
        <end position="260"/>
    </location>
</feature>
<feature type="domain" description="HTH gntR-type" evidence="1">
    <location>
        <begin position="27"/>
        <end position="95"/>
    </location>
</feature>
<feature type="DNA-binding region" description="H-T-H motif" evidence="1">
    <location>
        <begin position="55"/>
        <end position="74"/>
    </location>
</feature>
<feature type="region of interest" description="Disordered" evidence="2">
    <location>
        <begin position="1"/>
        <end position="21"/>
    </location>
</feature>
<sequence length="260" mass="29095">MSAFDHSSDDTQETIGNSLRRRPLARKKLSEMVEEELEQMIRRGEFGEGGQLPSERELMAFFNVGRPSVREALAALKRKGLVQINNGERARVSRPSADTIISELSGLAKDFLSAPGGIAHFEQLRLFFESSLVRYAAENATDEQISLLSKALEINGQSLDDNAQFIRSDVDFHRVLAEIPGNPIFMATHVALLDWLIAARPKVSEQELHHHNNVSFQEHIAIFNAIRDRDPDEADRALQTHLKSVSATWRALGKSKKSAK</sequence>
<protein>
    <recommendedName>
        <fullName evidence="1">HTH-type transcriptional repressor NanR</fullName>
    </recommendedName>
</protein>
<comment type="function">
    <text evidence="1">Transcriptional repressor that controls expression of the genes required for the catabolism of sialic acids.</text>
</comment>
<comment type="similarity">
    <text evidence="1">Belongs to the NanR family.</text>
</comment>
<dbReference type="EMBL" id="CP002824">
    <property type="protein sequence ID" value="AEG95587.1"/>
    <property type="molecule type" value="Genomic_DNA"/>
</dbReference>
<dbReference type="RefSeq" id="WP_015369707.1">
    <property type="nucleotide sequence ID" value="NC_015663.1"/>
</dbReference>
<dbReference type="RefSeq" id="YP_004590866.1">
    <property type="nucleotide sequence ID" value="NC_015663.1"/>
</dbReference>
<dbReference type="SMR" id="G0E1Z6"/>
<dbReference type="GeneID" id="93313782"/>
<dbReference type="KEGG" id="eae:EAE_03260"/>
<dbReference type="PATRIC" id="fig|1028307.3.peg.647"/>
<dbReference type="eggNOG" id="COG2186">
    <property type="taxonomic scope" value="Bacteria"/>
</dbReference>
<dbReference type="HOGENOM" id="CLU_017584_9_1_6"/>
<dbReference type="OrthoDB" id="7005926at2"/>
<dbReference type="Proteomes" id="UP000008881">
    <property type="component" value="Chromosome"/>
</dbReference>
<dbReference type="GO" id="GO:0003677">
    <property type="term" value="F:DNA binding"/>
    <property type="evidence" value="ECO:0007669"/>
    <property type="project" value="UniProtKB-KW"/>
</dbReference>
<dbReference type="GO" id="GO:0003700">
    <property type="term" value="F:DNA-binding transcription factor activity"/>
    <property type="evidence" value="ECO:0007669"/>
    <property type="project" value="UniProtKB-UniRule"/>
</dbReference>
<dbReference type="GO" id="GO:0045892">
    <property type="term" value="P:negative regulation of DNA-templated transcription"/>
    <property type="evidence" value="ECO:0007669"/>
    <property type="project" value="UniProtKB-UniRule"/>
</dbReference>
<dbReference type="CDD" id="cd07377">
    <property type="entry name" value="WHTH_GntR"/>
    <property type="match status" value="1"/>
</dbReference>
<dbReference type="FunFam" id="1.10.10.10:FF:000150">
    <property type="entry name" value="HTH-type transcriptional repressor NanR"/>
    <property type="match status" value="1"/>
</dbReference>
<dbReference type="Gene3D" id="1.20.120.530">
    <property type="entry name" value="GntR ligand-binding domain-like"/>
    <property type="match status" value="1"/>
</dbReference>
<dbReference type="Gene3D" id="1.10.10.10">
    <property type="entry name" value="Winged helix-like DNA-binding domain superfamily/Winged helix DNA-binding domain"/>
    <property type="match status" value="1"/>
</dbReference>
<dbReference type="HAMAP" id="MF_01236">
    <property type="entry name" value="HTH_NanR"/>
    <property type="match status" value="1"/>
</dbReference>
<dbReference type="InterPro" id="IPR011711">
    <property type="entry name" value="GntR_C"/>
</dbReference>
<dbReference type="InterPro" id="IPR008920">
    <property type="entry name" value="TF_FadR/GntR_C"/>
</dbReference>
<dbReference type="InterPro" id="IPR000524">
    <property type="entry name" value="Tscrpt_reg_HTH_GntR"/>
</dbReference>
<dbReference type="InterPro" id="IPR023730">
    <property type="entry name" value="Tscrpt_reg_NanR"/>
</dbReference>
<dbReference type="InterPro" id="IPR036388">
    <property type="entry name" value="WH-like_DNA-bd_sf"/>
</dbReference>
<dbReference type="InterPro" id="IPR036390">
    <property type="entry name" value="WH_DNA-bd_sf"/>
</dbReference>
<dbReference type="NCBIfam" id="NF003011">
    <property type="entry name" value="PRK03837.1"/>
    <property type="match status" value="1"/>
</dbReference>
<dbReference type="PANTHER" id="PTHR43537:SF53">
    <property type="entry name" value="HTH-TYPE TRANSCRIPTIONAL REPRESSOR NANR"/>
    <property type="match status" value="1"/>
</dbReference>
<dbReference type="PANTHER" id="PTHR43537">
    <property type="entry name" value="TRANSCRIPTIONAL REGULATOR, GNTR FAMILY"/>
    <property type="match status" value="1"/>
</dbReference>
<dbReference type="Pfam" id="PF07729">
    <property type="entry name" value="FCD"/>
    <property type="match status" value="1"/>
</dbReference>
<dbReference type="Pfam" id="PF00392">
    <property type="entry name" value="GntR"/>
    <property type="match status" value="1"/>
</dbReference>
<dbReference type="PRINTS" id="PR00035">
    <property type="entry name" value="HTHGNTR"/>
</dbReference>
<dbReference type="SMART" id="SM00895">
    <property type="entry name" value="FCD"/>
    <property type="match status" value="1"/>
</dbReference>
<dbReference type="SMART" id="SM00345">
    <property type="entry name" value="HTH_GNTR"/>
    <property type="match status" value="1"/>
</dbReference>
<dbReference type="SUPFAM" id="SSF48008">
    <property type="entry name" value="GntR ligand-binding domain-like"/>
    <property type="match status" value="1"/>
</dbReference>
<dbReference type="SUPFAM" id="SSF46785">
    <property type="entry name" value="Winged helix' DNA-binding domain"/>
    <property type="match status" value="1"/>
</dbReference>
<dbReference type="PROSITE" id="PS50949">
    <property type="entry name" value="HTH_GNTR"/>
    <property type="match status" value="1"/>
</dbReference>
<reference key="1">
    <citation type="journal article" date="2012" name="J. Bacteriol.">
        <title>Complete genome sequence of Enterobacter aerogenes KCTC 2190.</title>
        <authorList>
            <person name="Shin S.H."/>
            <person name="Kim S."/>
            <person name="Kim J.Y."/>
            <person name="Lee S."/>
            <person name="Um Y."/>
            <person name="Oh M.K."/>
            <person name="Kim Y.R."/>
            <person name="Lee J."/>
            <person name="Yang K.S."/>
        </authorList>
    </citation>
    <scope>NUCLEOTIDE SEQUENCE [LARGE SCALE GENOMIC DNA]</scope>
    <source>
        <strain>ATCC 13048 / DSM 30053 / CCUG 1429 / JCM 1235 / KCTC 2190 / NBRC 13534 / NCIMB 10102 / NCTC 10006 / CDC 819-56</strain>
    </source>
</reference>
<evidence type="ECO:0000255" key="1">
    <source>
        <dbReference type="HAMAP-Rule" id="MF_01236"/>
    </source>
</evidence>
<evidence type="ECO:0000256" key="2">
    <source>
        <dbReference type="SAM" id="MobiDB-lite"/>
    </source>
</evidence>
<gene>
    <name evidence="1" type="primary">nanR</name>
    <name type="ordered locus">EAE_03260</name>
</gene>
<accession>G0E1Z6</accession>